<feature type="chain" id="PRO_1000025455" description="Glutamyl-tRNA(Gln) amidotransferase subunit D">
    <location>
        <begin position="1"/>
        <end position="424"/>
    </location>
</feature>
<feature type="domain" description="Asparaginase/glutaminase" evidence="2">
    <location>
        <begin position="84"/>
        <end position="406"/>
    </location>
</feature>
<feature type="region of interest" description="Disordered" evidence="3">
    <location>
        <begin position="58"/>
        <end position="79"/>
    </location>
</feature>
<feature type="compositionally biased region" description="Basic and acidic residues" evidence="3">
    <location>
        <begin position="66"/>
        <end position="78"/>
    </location>
</feature>
<feature type="active site" evidence="1">
    <location>
        <position position="94"/>
    </location>
</feature>
<feature type="active site" evidence="1">
    <location>
        <position position="170"/>
    </location>
</feature>
<feature type="active site" evidence="1">
    <location>
        <position position="171"/>
    </location>
</feature>
<feature type="active site" evidence="1">
    <location>
        <position position="247"/>
    </location>
</feature>
<gene>
    <name evidence="1" type="primary">gatD</name>
    <name type="ordered locus">Mbar_A0003</name>
</gene>
<keyword id="KW-0067">ATP-binding</keyword>
<keyword id="KW-0436">Ligase</keyword>
<keyword id="KW-0547">Nucleotide-binding</keyword>
<keyword id="KW-0648">Protein biosynthesis</keyword>
<reference key="1">
    <citation type="journal article" date="2006" name="J. Bacteriol.">
        <title>The Methanosarcina barkeri genome: comparative analysis with Methanosarcina acetivorans and Methanosarcina mazei reveals extensive rearrangement within methanosarcinal genomes.</title>
        <authorList>
            <person name="Maeder D.L."/>
            <person name="Anderson I."/>
            <person name="Brettin T.S."/>
            <person name="Bruce D.C."/>
            <person name="Gilna P."/>
            <person name="Han C.S."/>
            <person name="Lapidus A."/>
            <person name="Metcalf W.W."/>
            <person name="Saunders E."/>
            <person name="Tapia R."/>
            <person name="Sowers K.R."/>
        </authorList>
    </citation>
    <scope>NUCLEOTIDE SEQUENCE [LARGE SCALE GENOMIC DNA]</scope>
    <source>
        <strain>Fusaro / DSM 804</strain>
    </source>
</reference>
<sequence>MEFKQGDRVRIEKNGTVYEGKVMPSMEGYITIKMNSGYNAGFSMDKVKITLLENNGENTNGGLNGGKEHKTAGEEVQKSGKKLPKVAILSTGGTIASKIDYRTGAVTSQFTADDILAAIPELREIADFKGRVISSILSENMDSESWQNLARAIVEEIEAGADGVIVTHGTDTMMYTAAALSFMIETPVPIVIVGSQRSADRPSSDNAMNAICAALVAISDIAEVSVVMHGTTSDDFCEIHRGTKVRKMHTSRRDAFKSINSRPIGIVDYNTRKIKTFIDYIKRGERPLKFNPGMEPKCALVKFTPGSGPEILDHYIDSGYRGLVLEGTGLGHVSTKWIPKIQKATDAKMPVIVTSQCLNGRICDRVYDTGRDMLKAGAIEGEDTLPEIALVKLMWVLGQTDEFNEAVKMLREDISGEITKCCFK</sequence>
<dbReference type="EC" id="6.3.5.-" evidence="1"/>
<dbReference type="EMBL" id="CP000099">
    <property type="protein sequence ID" value="AAZ68996.1"/>
    <property type="molecule type" value="Genomic_DNA"/>
</dbReference>
<dbReference type="SMR" id="Q46GJ6"/>
<dbReference type="STRING" id="269797.Mbar_A0003"/>
<dbReference type="PaxDb" id="269797-Mbar_A0003"/>
<dbReference type="KEGG" id="mba:Mbar_A0003"/>
<dbReference type="eggNOG" id="arCOG01924">
    <property type="taxonomic scope" value="Archaea"/>
</dbReference>
<dbReference type="HOGENOM" id="CLU_019134_2_1_2"/>
<dbReference type="OrthoDB" id="371959at2157"/>
<dbReference type="GO" id="GO:0004067">
    <property type="term" value="F:asparaginase activity"/>
    <property type="evidence" value="ECO:0007669"/>
    <property type="project" value="InterPro"/>
</dbReference>
<dbReference type="GO" id="GO:0005524">
    <property type="term" value="F:ATP binding"/>
    <property type="evidence" value="ECO:0007669"/>
    <property type="project" value="UniProtKB-KW"/>
</dbReference>
<dbReference type="GO" id="GO:0050567">
    <property type="term" value="F:glutaminyl-tRNA synthase (glutamine-hydrolyzing) activity"/>
    <property type="evidence" value="ECO:0007669"/>
    <property type="project" value="UniProtKB-UniRule"/>
</dbReference>
<dbReference type="GO" id="GO:0006520">
    <property type="term" value="P:amino acid metabolic process"/>
    <property type="evidence" value="ECO:0007669"/>
    <property type="project" value="InterPro"/>
</dbReference>
<dbReference type="GO" id="GO:0006450">
    <property type="term" value="P:regulation of translational fidelity"/>
    <property type="evidence" value="ECO:0007669"/>
    <property type="project" value="InterPro"/>
</dbReference>
<dbReference type="GO" id="GO:0006412">
    <property type="term" value="P:translation"/>
    <property type="evidence" value="ECO:0007669"/>
    <property type="project" value="UniProtKB-UniRule"/>
</dbReference>
<dbReference type="CDD" id="cd08962">
    <property type="entry name" value="GatD"/>
    <property type="match status" value="1"/>
</dbReference>
<dbReference type="FunFam" id="3.40.50.1170:FF:000001">
    <property type="entry name" value="L-asparaginase 2"/>
    <property type="match status" value="1"/>
</dbReference>
<dbReference type="Gene3D" id="2.30.30.520">
    <property type="match status" value="1"/>
</dbReference>
<dbReference type="Gene3D" id="3.40.50.40">
    <property type="match status" value="1"/>
</dbReference>
<dbReference type="Gene3D" id="3.40.50.1170">
    <property type="entry name" value="L-asparaginase, N-terminal domain"/>
    <property type="match status" value="1"/>
</dbReference>
<dbReference type="HAMAP" id="MF_00586">
    <property type="entry name" value="GatD"/>
    <property type="match status" value="1"/>
</dbReference>
<dbReference type="InterPro" id="IPR006033">
    <property type="entry name" value="AsnA_fam"/>
</dbReference>
<dbReference type="InterPro" id="IPR036152">
    <property type="entry name" value="Asp/glu_Ase-like_sf"/>
</dbReference>
<dbReference type="InterPro" id="IPR006034">
    <property type="entry name" value="Asparaginase/glutaminase-like"/>
</dbReference>
<dbReference type="InterPro" id="IPR020827">
    <property type="entry name" value="Asparaginase/glutaminase_AS1"/>
</dbReference>
<dbReference type="InterPro" id="IPR027475">
    <property type="entry name" value="Asparaginase/glutaminase_AS2"/>
</dbReference>
<dbReference type="InterPro" id="IPR040919">
    <property type="entry name" value="Asparaginase_C"/>
</dbReference>
<dbReference type="InterPro" id="IPR011878">
    <property type="entry name" value="GatD"/>
</dbReference>
<dbReference type="InterPro" id="IPR040918">
    <property type="entry name" value="GatD_N"/>
</dbReference>
<dbReference type="InterPro" id="IPR037222">
    <property type="entry name" value="GatD_N_sf"/>
</dbReference>
<dbReference type="InterPro" id="IPR027473">
    <property type="entry name" value="L-asparaginase_C"/>
</dbReference>
<dbReference type="InterPro" id="IPR027474">
    <property type="entry name" value="L-asparaginase_N"/>
</dbReference>
<dbReference type="InterPro" id="IPR037152">
    <property type="entry name" value="L-asparaginase_N_sf"/>
</dbReference>
<dbReference type="NCBIfam" id="TIGR00519">
    <property type="entry name" value="asnASE_I"/>
    <property type="match status" value="1"/>
</dbReference>
<dbReference type="NCBIfam" id="TIGR02153">
    <property type="entry name" value="gatD_arch"/>
    <property type="match status" value="1"/>
</dbReference>
<dbReference type="NCBIfam" id="NF003217">
    <property type="entry name" value="PRK04183.1"/>
    <property type="match status" value="1"/>
</dbReference>
<dbReference type="PANTHER" id="PTHR11707:SF28">
    <property type="entry name" value="60 KDA LYSOPHOSPHOLIPASE"/>
    <property type="match status" value="1"/>
</dbReference>
<dbReference type="PANTHER" id="PTHR11707">
    <property type="entry name" value="L-ASPARAGINASE"/>
    <property type="match status" value="1"/>
</dbReference>
<dbReference type="Pfam" id="PF00710">
    <property type="entry name" value="Asparaginase"/>
    <property type="match status" value="1"/>
</dbReference>
<dbReference type="Pfam" id="PF17763">
    <property type="entry name" value="Asparaginase_C"/>
    <property type="match status" value="1"/>
</dbReference>
<dbReference type="Pfam" id="PF18195">
    <property type="entry name" value="GatD_N"/>
    <property type="match status" value="1"/>
</dbReference>
<dbReference type="PIRSF" id="PIRSF500175">
    <property type="entry name" value="Glu_ADT_D"/>
    <property type="match status" value="1"/>
</dbReference>
<dbReference type="PIRSF" id="PIRSF001220">
    <property type="entry name" value="L-ASNase_gatD"/>
    <property type="match status" value="1"/>
</dbReference>
<dbReference type="PRINTS" id="PR00139">
    <property type="entry name" value="ASNGLNASE"/>
</dbReference>
<dbReference type="SMART" id="SM00870">
    <property type="entry name" value="Asparaginase"/>
    <property type="match status" value="1"/>
</dbReference>
<dbReference type="SUPFAM" id="SSF141300">
    <property type="entry name" value="GatD N-terminal domain-like"/>
    <property type="match status" value="1"/>
</dbReference>
<dbReference type="SUPFAM" id="SSF53774">
    <property type="entry name" value="Glutaminase/Asparaginase"/>
    <property type="match status" value="1"/>
</dbReference>
<dbReference type="PROSITE" id="PS00144">
    <property type="entry name" value="ASN_GLN_ASE_1"/>
    <property type="match status" value="1"/>
</dbReference>
<dbReference type="PROSITE" id="PS00917">
    <property type="entry name" value="ASN_GLN_ASE_2"/>
    <property type="match status" value="1"/>
</dbReference>
<dbReference type="PROSITE" id="PS51732">
    <property type="entry name" value="ASN_GLN_ASE_3"/>
    <property type="match status" value="1"/>
</dbReference>
<protein>
    <recommendedName>
        <fullName evidence="1">Glutamyl-tRNA(Gln) amidotransferase subunit D</fullName>
        <shortName evidence="1">Glu-ADT subunit D</shortName>
        <ecNumber evidence="1">6.3.5.-</ecNumber>
    </recommendedName>
</protein>
<evidence type="ECO:0000255" key="1">
    <source>
        <dbReference type="HAMAP-Rule" id="MF_00586"/>
    </source>
</evidence>
<evidence type="ECO:0000255" key="2">
    <source>
        <dbReference type="PROSITE-ProRule" id="PRU01068"/>
    </source>
</evidence>
<evidence type="ECO:0000256" key="3">
    <source>
        <dbReference type="SAM" id="MobiDB-lite"/>
    </source>
</evidence>
<proteinExistence type="inferred from homology"/>
<organism>
    <name type="scientific">Methanosarcina barkeri (strain Fusaro / DSM 804)</name>
    <dbReference type="NCBI Taxonomy" id="269797"/>
    <lineage>
        <taxon>Archaea</taxon>
        <taxon>Methanobacteriati</taxon>
        <taxon>Methanobacteriota</taxon>
        <taxon>Stenosarchaea group</taxon>
        <taxon>Methanomicrobia</taxon>
        <taxon>Methanosarcinales</taxon>
        <taxon>Methanosarcinaceae</taxon>
        <taxon>Methanosarcina</taxon>
    </lineage>
</organism>
<name>GATD_METBF</name>
<accession>Q46GJ6</accession>
<comment type="function">
    <text evidence="1">Allows the formation of correctly charged Gln-tRNA(Gln) through the transamidation of misacylated Glu-tRNA(Gln) in organisms which lack glutaminyl-tRNA synthetase. The reaction takes place in the presence of glutamine and ATP through an activated gamma-phospho-Glu-tRNA(Gln). The GatDE system is specific for glutamate and does not act on aspartate.</text>
</comment>
<comment type="catalytic activity">
    <reaction evidence="1">
        <text>L-glutamyl-tRNA(Gln) + L-glutamine + ATP + H2O = L-glutaminyl-tRNA(Gln) + L-glutamate + ADP + phosphate + H(+)</text>
        <dbReference type="Rhea" id="RHEA:17521"/>
        <dbReference type="Rhea" id="RHEA-COMP:9681"/>
        <dbReference type="Rhea" id="RHEA-COMP:9684"/>
        <dbReference type="ChEBI" id="CHEBI:15377"/>
        <dbReference type="ChEBI" id="CHEBI:15378"/>
        <dbReference type="ChEBI" id="CHEBI:29985"/>
        <dbReference type="ChEBI" id="CHEBI:30616"/>
        <dbReference type="ChEBI" id="CHEBI:43474"/>
        <dbReference type="ChEBI" id="CHEBI:58359"/>
        <dbReference type="ChEBI" id="CHEBI:78520"/>
        <dbReference type="ChEBI" id="CHEBI:78521"/>
        <dbReference type="ChEBI" id="CHEBI:456216"/>
    </reaction>
</comment>
<comment type="subunit">
    <text evidence="1">Heterodimer of GatD and GatE.</text>
</comment>
<comment type="similarity">
    <text evidence="1">Belongs to the asparaginase 1 family. GatD subfamily.</text>
</comment>